<organism>
    <name type="scientific">Salmonella schwarzengrund (strain CVM19633)</name>
    <dbReference type="NCBI Taxonomy" id="439843"/>
    <lineage>
        <taxon>Bacteria</taxon>
        <taxon>Pseudomonadati</taxon>
        <taxon>Pseudomonadota</taxon>
        <taxon>Gammaproteobacteria</taxon>
        <taxon>Enterobacterales</taxon>
        <taxon>Enterobacteriaceae</taxon>
        <taxon>Salmonella</taxon>
    </lineage>
</organism>
<gene>
    <name evidence="1" type="primary">efp</name>
    <name type="ordered locus">SeSA_A4604</name>
</gene>
<reference key="1">
    <citation type="journal article" date="2011" name="J. Bacteriol.">
        <title>Comparative genomics of 28 Salmonella enterica isolates: evidence for CRISPR-mediated adaptive sublineage evolution.</title>
        <authorList>
            <person name="Fricke W.F."/>
            <person name="Mammel M.K."/>
            <person name="McDermott P.F."/>
            <person name="Tartera C."/>
            <person name="White D.G."/>
            <person name="Leclerc J.E."/>
            <person name="Ravel J."/>
            <person name="Cebula T.A."/>
        </authorList>
    </citation>
    <scope>NUCLEOTIDE SEQUENCE [LARGE SCALE GENOMIC DNA]</scope>
    <source>
        <strain>CVM19633</strain>
    </source>
</reference>
<protein>
    <recommendedName>
        <fullName evidence="1">Elongation factor P</fullName>
        <shortName evidence="1">EF-P</shortName>
    </recommendedName>
</protein>
<comment type="function">
    <text evidence="1">Involved in peptide bond synthesis. Alleviates ribosome stalling that occurs when 3 or more consecutive Pro residues or the sequence PPG is present in a protein, possibly by augmenting the peptidyl transferase activity of the ribosome. Modification of Lys-34 is required for alleviation.</text>
</comment>
<comment type="pathway">
    <text evidence="1">Protein biosynthesis; polypeptide chain elongation.</text>
</comment>
<comment type="subcellular location">
    <subcellularLocation>
        <location evidence="1">Cytoplasm</location>
    </subcellularLocation>
</comment>
<comment type="PTM">
    <text evidence="1">Is beta-lysylated on the epsilon-amino group of Lys-34 by the combined action of EpmA and EpmB, and then hydroxylated on the C5 position of the same residue by EpmC. Lysylation is critical for the stimulatory effect of EF-P on peptide-bond formation. The lysylation moiety would extend toward the peptidyltransferase center and stabilize the terminal 3-CCA end of the tRNA. The hydroxylation of the C5 position on Lys-34 would allow additional potential stabilizing hydrogen-bond interactions with the P-tRNA.</text>
</comment>
<comment type="similarity">
    <text evidence="1">Belongs to the elongation factor P family.</text>
</comment>
<name>EFP_SALSV</name>
<feature type="chain" id="PRO_1000096204" description="Elongation factor P">
    <location>
        <begin position="1"/>
        <end position="188"/>
    </location>
</feature>
<feature type="modified residue" description="N6-(3,6-diaminohexanoyl)-5-hydroxylysine" evidence="1">
    <location>
        <position position="34"/>
    </location>
</feature>
<proteinExistence type="inferred from homology"/>
<sequence length="188" mass="20623">MATYYSNDFRSGLKIMLDGEPYAVESSEFVKPGKGQAFARVKLRRLLTGTRVEKTFKSTDSAEGADVVDMNLTYLYNDGEFWHFMNNETFEQLSADAKAIGDNAKWLLDQAECIVTLWNGQPISVTPPNFVELEIVDTDPGLKGDTAGTGGKPATLSTGAVVKVPLFVQIGEVIKVDTRSGEYVSRVK</sequence>
<accession>B4TSD0</accession>
<dbReference type="EMBL" id="CP001127">
    <property type="protein sequence ID" value="ACF89252.1"/>
    <property type="molecule type" value="Genomic_DNA"/>
</dbReference>
<dbReference type="RefSeq" id="WP_000257282.1">
    <property type="nucleotide sequence ID" value="NC_011094.1"/>
</dbReference>
<dbReference type="SMR" id="B4TSD0"/>
<dbReference type="GeneID" id="66758562"/>
<dbReference type="KEGG" id="sew:SeSA_A4604"/>
<dbReference type="HOGENOM" id="CLU_074944_0_0_6"/>
<dbReference type="UniPathway" id="UPA00345"/>
<dbReference type="Proteomes" id="UP000001865">
    <property type="component" value="Chromosome"/>
</dbReference>
<dbReference type="GO" id="GO:0005829">
    <property type="term" value="C:cytosol"/>
    <property type="evidence" value="ECO:0007669"/>
    <property type="project" value="UniProtKB-ARBA"/>
</dbReference>
<dbReference type="GO" id="GO:0003746">
    <property type="term" value="F:translation elongation factor activity"/>
    <property type="evidence" value="ECO:0007669"/>
    <property type="project" value="UniProtKB-UniRule"/>
</dbReference>
<dbReference type="GO" id="GO:0043043">
    <property type="term" value="P:peptide biosynthetic process"/>
    <property type="evidence" value="ECO:0007669"/>
    <property type="project" value="InterPro"/>
</dbReference>
<dbReference type="CDD" id="cd04470">
    <property type="entry name" value="S1_EF-P_repeat_1"/>
    <property type="match status" value="1"/>
</dbReference>
<dbReference type="CDD" id="cd05794">
    <property type="entry name" value="S1_EF-P_repeat_2"/>
    <property type="match status" value="1"/>
</dbReference>
<dbReference type="FunFam" id="2.30.30.30:FF:000003">
    <property type="entry name" value="Elongation factor P"/>
    <property type="match status" value="1"/>
</dbReference>
<dbReference type="FunFam" id="2.40.50.140:FF:000004">
    <property type="entry name" value="Elongation factor P"/>
    <property type="match status" value="1"/>
</dbReference>
<dbReference type="FunFam" id="2.40.50.140:FF:000009">
    <property type="entry name" value="Elongation factor P"/>
    <property type="match status" value="1"/>
</dbReference>
<dbReference type="Gene3D" id="2.30.30.30">
    <property type="match status" value="1"/>
</dbReference>
<dbReference type="Gene3D" id="2.40.50.140">
    <property type="entry name" value="Nucleic acid-binding proteins"/>
    <property type="match status" value="2"/>
</dbReference>
<dbReference type="HAMAP" id="MF_00141">
    <property type="entry name" value="EF_P"/>
    <property type="match status" value="1"/>
</dbReference>
<dbReference type="InterPro" id="IPR015365">
    <property type="entry name" value="Elong-fact-P_C"/>
</dbReference>
<dbReference type="InterPro" id="IPR012340">
    <property type="entry name" value="NA-bd_OB-fold"/>
</dbReference>
<dbReference type="InterPro" id="IPR014722">
    <property type="entry name" value="Rib_uL2_dom2"/>
</dbReference>
<dbReference type="InterPro" id="IPR020599">
    <property type="entry name" value="Transl_elong_fac_P/YeiP"/>
</dbReference>
<dbReference type="InterPro" id="IPR013185">
    <property type="entry name" value="Transl_elong_KOW-like"/>
</dbReference>
<dbReference type="InterPro" id="IPR001059">
    <property type="entry name" value="Transl_elong_P/YeiP_cen"/>
</dbReference>
<dbReference type="InterPro" id="IPR013852">
    <property type="entry name" value="Transl_elong_P/YeiP_CS"/>
</dbReference>
<dbReference type="InterPro" id="IPR011768">
    <property type="entry name" value="Transl_elongation_fac_P"/>
</dbReference>
<dbReference type="InterPro" id="IPR008991">
    <property type="entry name" value="Translation_prot_SH3-like_sf"/>
</dbReference>
<dbReference type="NCBIfam" id="TIGR00038">
    <property type="entry name" value="efp"/>
    <property type="match status" value="1"/>
</dbReference>
<dbReference type="NCBIfam" id="NF001810">
    <property type="entry name" value="PRK00529.1"/>
    <property type="match status" value="1"/>
</dbReference>
<dbReference type="PANTHER" id="PTHR30053">
    <property type="entry name" value="ELONGATION FACTOR P"/>
    <property type="match status" value="1"/>
</dbReference>
<dbReference type="PANTHER" id="PTHR30053:SF12">
    <property type="entry name" value="ELONGATION FACTOR P (EF-P) FAMILY PROTEIN"/>
    <property type="match status" value="1"/>
</dbReference>
<dbReference type="Pfam" id="PF01132">
    <property type="entry name" value="EFP"/>
    <property type="match status" value="1"/>
</dbReference>
<dbReference type="Pfam" id="PF08207">
    <property type="entry name" value="EFP_N"/>
    <property type="match status" value="1"/>
</dbReference>
<dbReference type="Pfam" id="PF09285">
    <property type="entry name" value="Elong-fact-P_C"/>
    <property type="match status" value="1"/>
</dbReference>
<dbReference type="PIRSF" id="PIRSF005901">
    <property type="entry name" value="EF-P"/>
    <property type="match status" value="1"/>
</dbReference>
<dbReference type="SMART" id="SM01185">
    <property type="entry name" value="EFP"/>
    <property type="match status" value="1"/>
</dbReference>
<dbReference type="SMART" id="SM00841">
    <property type="entry name" value="Elong-fact-P_C"/>
    <property type="match status" value="1"/>
</dbReference>
<dbReference type="SUPFAM" id="SSF50249">
    <property type="entry name" value="Nucleic acid-binding proteins"/>
    <property type="match status" value="2"/>
</dbReference>
<dbReference type="SUPFAM" id="SSF50104">
    <property type="entry name" value="Translation proteins SH3-like domain"/>
    <property type="match status" value="1"/>
</dbReference>
<dbReference type="PROSITE" id="PS01275">
    <property type="entry name" value="EFP"/>
    <property type="match status" value="1"/>
</dbReference>
<evidence type="ECO:0000255" key="1">
    <source>
        <dbReference type="HAMAP-Rule" id="MF_00141"/>
    </source>
</evidence>
<keyword id="KW-0963">Cytoplasm</keyword>
<keyword id="KW-0251">Elongation factor</keyword>
<keyword id="KW-0379">Hydroxylation</keyword>
<keyword id="KW-0648">Protein biosynthesis</keyword>